<organism>
    <name type="scientific">Heliobacterium modesticaldum (strain ATCC 51547 / Ice1)</name>
    <dbReference type="NCBI Taxonomy" id="498761"/>
    <lineage>
        <taxon>Bacteria</taxon>
        <taxon>Bacillati</taxon>
        <taxon>Bacillota</taxon>
        <taxon>Clostridia</taxon>
        <taxon>Eubacteriales</taxon>
        <taxon>Heliobacteriaceae</taxon>
        <taxon>Heliomicrobium</taxon>
    </lineage>
</organism>
<evidence type="ECO:0000255" key="1">
    <source>
        <dbReference type="HAMAP-Rule" id="MF_00129"/>
    </source>
</evidence>
<feature type="chain" id="PRO_0000345279" description="tRNA uridine 5-carboxymethylaminomethyl modification enzyme MnmG">
    <location>
        <begin position="1"/>
        <end position="637"/>
    </location>
</feature>
<feature type="binding site" evidence="1">
    <location>
        <begin position="15"/>
        <end position="20"/>
    </location>
    <ligand>
        <name>FAD</name>
        <dbReference type="ChEBI" id="CHEBI:57692"/>
    </ligand>
</feature>
<feature type="binding site" evidence="1">
    <location>
        <position position="127"/>
    </location>
    <ligand>
        <name>FAD</name>
        <dbReference type="ChEBI" id="CHEBI:57692"/>
    </ligand>
</feature>
<feature type="binding site" evidence="1">
    <location>
        <position position="182"/>
    </location>
    <ligand>
        <name>FAD</name>
        <dbReference type="ChEBI" id="CHEBI:57692"/>
    </ligand>
</feature>
<feature type="binding site" evidence="1">
    <location>
        <begin position="274"/>
        <end position="288"/>
    </location>
    <ligand>
        <name>NAD(+)</name>
        <dbReference type="ChEBI" id="CHEBI:57540"/>
    </ligand>
</feature>
<feature type="binding site" evidence="1">
    <location>
        <position position="371"/>
    </location>
    <ligand>
        <name>FAD</name>
        <dbReference type="ChEBI" id="CHEBI:57692"/>
    </ligand>
</feature>
<accession>B0TAB5</accession>
<gene>
    <name evidence="1" type="primary">mnmG</name>
    <name evidence="1" type="synonym">gidA</name>
    <name type="ordered locus">Helmi_10270</name>
    <name type="ORF">HM1_0913</name>
</gene>
<sequence length="637" mass="70779">MTEYVAGKYDVIVIGAGHAGCEAALASARLGAKTLILTISWDNVALMPCNPAIGGPAKGHLVREIDALGGQMGLTIDKTCIQIRLLNTGKGPAVHALRAQADKKRYQREMIRVLEHQENLDVRQAMVESVVVEQGRVRGIRTNTGAFFAAPALVITTGTYLRGRIIIGDLHYPGGPNGYFPSVALAASLRDIGVRLGRFKTGTPARVDGRTVDFSQMVEQPGDREPLNFSFLSPRIERKQISCWLTYTTEETHQIIRDNLHRSPLYAGVIEGTGPRYCPSIEDKVVRFADKKSHQVFIEPEGEGTHEMYVQGMSTSLPEDVQVTMLRSIIGMKDVKIIRPGYAIEYDYVDPTQLRLSLEHQEIGGLFTAGQINGTSGYEEAAAQGLMAGINAARFVKGEEPLVLKRSDAYIGVLIDDLVTKGTNEPYRMLTSRAEYRLLLRQDNADQRLTEIGRSIGLVDDRRYRRFREKMQLLEQEVVRWKSSFVTPGNKKIQAILDEKKSAPLTKGVSLYDLLRRPELTYDDLIPLCNDGEKDLPIDPEVAEQVEISAKFEGYLVKQQAQVDRFNKLENKRLPADLDYKRVHGLSNEGRQKLIARKPVSIGQASRISGVSPADISILLVYLEQQRRLAPGEGGVD</sequence>
<dbReference type="EMBL" id="CP000930">
    <property type="protein sequence ID" value="ABZ83652.1"/>
    <property type="molecule type" value="Genomic_DNA"/>
</dbReference>
<dbReference type="RefSeq" id="WP_012282175.1">
    <property type="nucleotide sequence ID" value="NC_010337.2"/>
</dbReference>
<dbReference type="SMR" id="B0TAB5"/>
<dbReference type="STRING" id="498761.HM1_0913"/>
<dbReference type="KEGG" id="hmo:HM1_0913"/>
<dbReference type="eggNOG" id="COG0445">
    <property type="taxonomic scope" value="Bacteria"/>
</dbReference>
<dbReference type="HOGENOM" id="CLU_007831_2_2_9"/>
<dbReference type="OrthoDB" id="9815560at2"/>
<dbReference type="Proteomes" id="UP000008550">
    <property type="component" value="Chromosome"/>
</dbReference>
<dbReference type="GO" id="GO:0005829">
    <property type="term" value="C:cytosol"/>
    <property type="evidence" value="ECO:0007669"/>
    <property type="project" value="TreeGrafter"/>
</dbReference>
<dbReference type="GO" id="GO:0050660">
    <property type="term" value="F:flavin adenine dinucleotide binding"/>
    <property type="evidence" value="ECO:0007669"/>
    <property type="project" value="UniProtKB-UniRule"/>
</dbReference>
<dbReference type="GO" id="GO:0030488">
    <property type="term" value="P:tRNA methylation"/>
    <property type="evidence" value="ECO:0007669"/>
    <property type="project" value="TreeGrafter"/>
</dbReference>
<dbReference type="GO" id="GO:0002098">
    <property type="term" value="P:tRNA wobble uridine modification"/>
    <property type="evidence" value="ECO:0007669"/>
    <property type="project" value="InterPro"/>
</dbReference>
<dbReference type="FunFam" id="1.10.10.1800:FF:000001">
    <property type="entry name" value="tRNA uridine 5-carboxymethylaminomethyl modification enzyme MnmG"/>
    <property type="match status" value="1"/>
</dbReference>
<dbReference type="FunFam" id="1.10.150.570:FF:000001">
    <property type="entry name" value="tRNA uridine 5-carboxymethylaminomethyl modification enzyme MnmG"/>
    <property type="match status" value="1"/>
</dbReference>
<dbReference type="FunFam" id="3.50.50.60:FF:000002">
    <property type="entry name" value="tRNA uridine 5-carboxymethylaminomethyl modification enzyme MnmG"/>
    <property type="match status" value="1"/>
</dbReference>
<dbReference type="FunFam" id="3.50.50.60:FF:000063">
    <property type="entry name" value="tRNA uridine 5-carboxymethylaminomethyl modification enzyme MnmG"/>
    <property type="match status" value="1"/>
</dbReference>
<dbReference type="Gene3D" id="3.50.50.60">
    <property type="entry name" value="FAD/NAD(P)-binding domain"/>
    <property type="match status" value="2"/>
</dbReference>
<dbReference type="Gene3D" id="1.10.150.570">
    <property type="entry name" value="GidA associated domain, C-terminal subdomain"/>
    <property type="match status" value="1"/>
</dbReference>
<dbReference type="Gene3D" id="1.10.10.1800">
    <property type="entry name" value="tRNA uridine 5-carboxymethylaminomethyl modification enzyme MnmG/GidA"/>
    <property type="match status" value="1"/>
</dbReference>
<dbReference type="HAMAP" id="MF_00129">
    <property type="entry name" value="MnmG_GidA"/>
    <property type="match status" value="1"/>
</dbReference>
<dbReference type="InterPro" id="IPR036188">
    <property type="entry name" value="FAD/NAD-bd_sf"/>
</dbReference>
<dbReference type="InterPro" id="IPR049312">
    <property type="entry name" value="GIDA_C_N"/>
</dbReference>
<dbReference type="InterPro" id="IPR004416">
    <property type="entry name" value="MnmG"/>
</dbReference>
<dbReference type="InterPro" id="IPR002218">
    <property type="entry name" value="MnmG-rel"/>
</dbReference>
<dbReference type="InterPro" id="IPR020595">
    <property type="entry name" value="MnmG-rel_CS"/>
</dbReference>
<dbReference type="InterPro" id="IPR026904">
    <property type="entry name" value="MnmG_C"/>
</dbReference>
<dbReference type="InterPro" id="IPR047001">
    <property type="entry name" value="MnmG_C_subdom"/>
</dbReference>
<dbReference type="InterPro" id="IPR044920">
    <property type="entry name" value="MnmG_C_subdom_sf"/>
</dbReference>
<dbReference type="InterPro" id="IPR040131">
    <property type="entry name" value="MnmG_N"/>
</dbReference>
<dbReference type="NCBIfam" id="TIGR00136">
    <property type="entry name" value="mnmG_gidA"/>
    <property type="match status" value="1"/>
</dbReference>
<dbReference type="PANTHER" id="PTHR11806">
    <property type="entry name" value="GLUCOSE INHIBITED DIVISION PROTEIN A"/>
    <property type="match status" value="1"/>
</dbReference>
<dbReference type="PANTHER" id="PTHR11806:SF0">
    <property type="entry name" value="PROTEIN MTO1 HOMOLOG, MITOCHONDRIAL"/>
    <property type="match status" value="1"/>
</dbReference>
<dbReference type="Pfam" id="PF01134">
    <property type="entry name" value="GIDA"/>
    <property type="match status" value="1"/>
</dbReference>
<dbReference type="Pfam" id="PF21680">
    <property type="entry name" value="GIDA_C_1st"/>
    <property type="match status" value="1"/>
</dbReference>
<dbReference type="Pfam" id="PF13932">
    <property type="entry name" value="SAM_GIDA_C"/>
    <property type="match status" value="1"/>
</dbReference>
<dbReference type="PRINTS" id="PR00411">
    <property type="entry name" value="PNDRDTASEI"/>
</dbReference>
<dbReference type="SMART" id="SM01228">
    <property type="entry name" value="GIDA_assoc_3"/>
    <property type="match status" value="1"/>
</dbReference>
<dbReference type="SUPFAM" id="SSF51905">
    <property type="entry name" value="FAD/NAD(P)-binding domain"/>
    <property type="match status" value="1"/>
</dbReference>
<dbReference type="PROSITE" id="PS01280">
    <property type="entry name" value="GIDA_1"/>
    <property type="match status" value="1"/>
</dbReference>
<dbReference type="PROSITE" id="PS01281">
    <property type="entry name" value="GIDA_2"/>
    <property type="match status" value="1"/>
</dbReference>
<comment type="function">
    <text evidence="1">NAD-binding protein involved in the addition of a carboxymethylaminomethyl (cmnm) group at the wobble position (U34) of certain tRNAs, forming tRNA-cmnm(5)s(2)U34.</text>
</comment>
<comment type="cofactor">
    <cofactor evidence="1">
        <name>FAD</name>
        <dbReference type="ChEBI" id="CHEBI:57692"/>
    </cofactor>
</comment>
<comment type="subunit">
    <text evidence="1">Homodimer. Heterotetramer of two MnmE and two MnmG subunits.</text>
</comment>
<comment type="subcellular location">
    <subcellularLocation>
        <location evidence="1">Cytoplasm</location>
    </subcellularLocation>
</comment>
<comment type="similarity">
    <text evidence="1">Belongs to the MnmG family.</text>
</comment>
<proteinExistence type="inferred from homology"/>
<protein>
    <recommendedName>
        <fullName evidence="1">tRNA uridine 5-carboxymethylaminomethyl modification enzyme MnmG</fullName>
    </recommendedName>
    <alternativeName>
        <fullName evidence="1">Glucose-inhibited division protein A</fullName>
    </alternativeName>
</protein>
<name>MNMG_HELMI</name>
<keyword id="KW-0963">Cytoplasm</keyword>
<keyword id="KW-0274">FAD</keyword>
<keyword id="KW-0285">Flavoprotein</keyword>
<keyword id="KW-0520">NAD</keyword>
<keyword id="KW-1185">Reference proteome</keyword>
<keyword id="KW-0819">tRNA processing</keyword>
<reference key="1">
    <citation type="journal article" date="2008" name="J. Bacteriol.">
        <title>The genome of Heliobacterium modesticaldum, a phototrophic representative of the Firmicutes containing the simplest photosynthetic apparatus.</title>
        <authorList>
            <person name="Sattley W.M."/>
            <person name="Madigan M.T."/>
            <person name="Swingley W.D."/>
            <person name="Cheung P.C."/>
            <person name="Clocksin K.M."/>
            <person name="Conrad A.L."/>
            <person name="Dejesa L.C."/>
            <person name="Honchak B.M."/>
            <person name="Jung D.O."/>
            <person name="Karbach L.E."/>
            <person name="Kurdoglu A."/>
            <person name="Lahiri S."/>
            <person name="Mastrian S.D."/>
            <person name="Page L.E."/>
            <person name="Taylor H.L."/>
            <person name="Wang Z.T."/>
            <person name="Raymond J."/>
            <person name="Chen M."/>
            <person name="Blankenship R.E."/>
            <person name="Touchman J.W."/>
        </authorList>
    </citation>
    <scope>NUCLEOTIDE SEQUENCE [LARGE SCALE GENOMIC DNA]</scope>
    <source>
        <strain>ATCC 51547 / Ice1</strain>
    </source>
</reference>